<name>ZB99_ENCCU</name>
<reference key="1">
    <citation type="journal article" date="2001" name="Nature">
        <title>Genome sequence and gene compaction of the eukaryote parasite Encephalitozoon cuniculi.</title>
        <authorList>
            <person name="Katinka M.D."/>
            <person name="Duprat S."/>
            <person name="Cornillot E."/>
            <person name="Metenier G."/>
            <person name="Thomarat F."/>
            <person name="Prensier G."/>
            <person name="Barbe V."/>
            <person name="Peyretaillade E."/>
            <person name="Brottier P."/>
            <person name="Wincker P."/>
            <person name="Delbac F."/>
            <person name="El Alaoui H."/>
            <person name="Peyret P."/>
            <person name="Saurin W."/>
            <person name="Gouy M."/>
            <person name="Weissenbach J."/>
            <person name="Vivares C.P."/>
        </authorList>
    </citation>
    <scope>NUCLEOTIDE SEQUENCE [LARGE SCALE GENOMIC DNA]</scope>
    <source>
        <strain>GB-M1</strain>
    </source>
</reference>
<accession>Q8SQW0</accession>
<organism>
    <name type="scientific">Encephalitozoon cuniculi (strain GB-M1)</name>
    <name type="common">Microsporidian parasite</name>
    <dbReference type="NCBI Taxonomy" id="284813"/>
    <lineage>
        <taxon>Eukaryota</taxon>
        <taxon>Fungi</taxon>
        <taxon>Fungi incertae sedis</taxon>
        <taxon>Microsporidia</taxon>
        <taxon>Unikaryonidae</taxon>
        <taxon>Encephalitozoon</taxon>
    </lineage>
</organism>
<proteinExistence type="predicted"/>
<gene>
    <name type="ordered locus">ECU11_0990</name>
</gene>
<protein>
    <recommendedName>
        <fullName>Zinc finger C2H2 protein ECU11_0990</fullName>
    </recommendedName>
</protein>
<keyword id="KW-0479">Metal-binding</keyword>
<keyword id="KW-1185">Reference proteome</keyword>
<keyword id="KW-0677">Repeat</keyword>
<keyword id="KW-0862">Zinc</keyword>
<keyword id="KW-0863">Zinc-finger</keyword>
<dbReference type="EMBL" id="AL590450">
    <property type="protein sequence ID" value="CAD26009.1"/>
    <property type="molecule type" value="Genomic_DNA"/>
</dbReference>
<dbReference type="RefSeq" id="NP_586405.1">
    <property type="nucleotide sequence ID" value="NM_001042238.1"/>
</dbReference>
<dbReference type="SMR" id="Q8SQW0"/>
<dbReference type="GeneID" id="860058"/>
<dbReference type="KEGG" id="ecu:ECU11_0990"/>
<dbReference type="VEuPathDB" id="MicrosporidiaDB:ECU11_0990"/>
<dbReference type="HOGENOM" id="CLU_1618991_0_0_1"/>
<dbReference type="InParanoid" id="Q8SQW0"/>
<dbReference type="OrthoDB" id="2190550at2759"/>
<dbReference type="Proteomes" id="UP000000819">
    <property type="component" value="Chromosome XI"/>
</dbReference>
<dbReference type="GO" id="GO:0008270">
    <property type="term" value="F:zinc ion binding"/>
    <property type="evidence" value="ECO:0007669"/>
    <property type="project" value="UniProtKB-KW"/>
</dbReference>
<dbReference type="Gene3D" id="3.30.160.60">
    <property type="entry name" value="Classic Zinc Finger"/>
    <property type="match status" value="1"/>
</dbReference>
<dbReference type="InterPro" id="IPR036236">
    <property type="entry name" value="Znf_C2H2_sf"/>
</dbReference>
<dbReference type="InterPro" id="IPR013087">
    <property type="entry name" value="Znf_C2H2_type"/>
</dbReference>
<dbReference type="SMART" id="SM00355">
    <property type="entry name" value="ZnF_C2H2"/>
    <property type="match status" value="2"/>
</dbReference>
<dbReference type="SUPFAM" id="SSF57667">
    <property type="entry name" value="beta-beta-alpha zinc fingers"/>
    <property type="match status" value="1"/>
</dbReference>
<dbReference type="PROSITE" id="PS00028">
    <property type="entry name" value="ZINC_FINGER_C2H2_1"/>
    <property type="match status" value="2"/>
</dbReference>
<dbReference type="PROSITE" id="PS50157">
    <property type="entry name" value="ZINC_FINGER_C2H2_2"/>
    <property type="match status" value="2"/>
</dbReference>
<feature type="chain" id="PRO_0000047832" description="Zinc finger C2H2 protein ECU11_0990">
    <location>
        <begin position="1"/>
        <end position="165"/>
    </location>
</feature>
<feature type="zinc finger region" description="C2H2-type 1" evidence="1">
    <location>
        <begin position="103"/>
        <end position="125"/>
    </location>
</feature>
<feature type="zinc finger region" description="C2H2-type 2" evidence="1">
    <location>
        <begin position="136"/>
        <end position="158"/>
    </location>
</feature>
<feature type="region of interest" description="Disordered" evidence="2">
    <location>
        <begin position="1"/>
        <end position="38"/>
    </location>
</feature>
<feature type="compositionally biased region" description="Basic and acidic residues" evidence="2">
    <location>
        <begin position="1"/>
        <end position="10"/>
    </location>
</feature>
<feature type="compositionally biased region" description="Basic and acidic residues" evidence="2">
    <location>
        <begin position="19"/>
        <end position="32"/>
    </location>
</feature>
<sequence length="165" mass="18764">MEAESPKERVQGVSGESWDPERGVKEREDTSSKKGKGVDIPQVLVSQSCAARECAKDEIRKFTKVPVEIDTVGGKPLVFMMWASEEKPVHRKRLHAEASRDVFGCESCEEVFDSFKKLQLHKAQHKGTSTEPSNSLFCPVCKKTFDEKRKLMLHSRYHKIDKDGR</sequence>
<evidence type="ECO:0000255" key="1">
    <source>
        <dbReference type="PROSITE-ProRule" id="PRU00042"/>
    </source>
</evidence>
<evidence type="ECO:0000256" key="2">
    <source>
        <dbReference type="SAM" id="MobiDB-lite"/>
    </source>
</evidence>